<gene>
    <name evidence="1" type="primary">proA</name>
    <name type="ordered locus">VS_2415</name>
</gene>
<name>PROA_VIBA3</name>
<proteinExistence type="inferred from homology"/>
<organism>
    <name type="scientific">Vibrio atlanticus (strain LGP32)</name>
    <name type="common">Vibrio splendidus (strain Mel32)</name>
    <dbReference type="NCBI Taxonomy" id="575788"/>
    <lineage>
        <taxon>Bacteria</taxon>
        <taxon>Pseudomonadati</taxon>
        <taxon>Pseudomonadota</taxon>
        <taxon>Gammaproteobacteria</taxon>
        <taxon>Vibrionales</taxon>
        <taxon>Vibrionaceae</taxon>
        <taxon>Vibrio</taxon>
    </lineage>
</organism>
<evidence type="ECO:0000255" key="1">
    <source>
        <dbReference type="HAMAP-Rule" id="MF_00412"/>
    </source>
</evidence>
<feature type="chain" id="PRO_1000193674" description="Gamma-glutamyl phosphate reductase">
    <location>
        <begin position="1"/>
        <end position="416"/>
    </location>
</feature>
<protein>
    <recommendedName>
        <fullName evidence="1">Gamma-glutamyl phosphate reductase</fullName>
        <shortName evidence="1">GPR</shortName>
        <ecNumber evidence="1">1.2.1.41</ecNumber>
    </recommendedName>
    <alternativeName>
        <fullName evidence="1">Glutamate-5-semialdehyde dehydrogenase</fullName>
    </alternativeName>
    <alternativeName>
        <fullName evidence="1">Glutamyl-gamma-semialdehyde dehydrogenase</fullName>
        <shortName evidence="1">GSA dehydrogenase</shortName>
    </alternativeName>
</protein>
<keyword id="KW-0028">Amino-acid biosynthesis</keyword>
<keyword id="KW-0963">Cytoplasm</keyword>
<keyword id="KW-0521">NADP</keyword>
<keyword id="KW-0560">Oxidoreductase</keyword>
<keyword id="KW-0641">Proline biosynthesis</keyword>
<comment type="function">
    <text evidence="1">Catalyzes the NADPH-dependent reduction of L-glutamate 5-phosphate into L-glutamate 5-semialdehyde and phosphate. The product spontaneously undergoes cyclization to form 1-pyrroline-5-carboxylate.</text>
</comment>
<comment type="catalytic activity">
    <reaction evidence="1">
        <text>L-glutamate 5-semialdehyde + phosphate + NADP(+) = L-glutamyl 5-phosphate + NADPH + H(+)</text>
        <dbReference type="Rhea" id="RHEA:19541"/>
        <dbReference type="ChEBI" id="CHEBI:15378"/>
        <dbReference type="ChEBI" id="CHEBI:43474"/>
        <dbReference type="ChEBI" id="CHEBI:57783"/>
        <dbReference type="ChEBI" id="CHEBI:58066"/>
        <dbReference type="ChEBI" id="CHEBI:58274"/>
        <dbReference type="ChEBI" id="CHEBI:58349"/>
        <dbReference type="EC" id="1.2.1.41"/>
    </reaction>
</comment>
<comment type="pathway">
    <text evidence="1">Amino-acid biosynthesis; L-proline biosynthesis; L-glutamate 5-semialdehyde from L-glutamate: step 2/2.</text>
</comment>
<comment type="subcellular location">
    <subcellularLocation>
        <location evidence="1">Cytoplasm</location>
    </subcellularLocation>
</comment>
<comment type="similarity">
    <text evidence="1">Belongs to the gamma-glutamyl phosphate reductase family.</text>
</comment>
<reference key="1">
    <citation type="submission" date="2009-02" db="EMBL/GenBank/DDBJ databases">
        <title>Vibrio splendidus str. LGP32 complete genome.</title>
        <authorList>
            <person name="Mazel D."/>
            <person name="Le Roux F."/>
        </authorList>
    </citation>
    <scope>NUCLEOTIDE SEQUENCE [LARGE SCALE GENOMIC DNA]</scope>
    <source>
        <strain>LGP32</strain>
    </source>
</reference>
<dbReference type="EC" id="1.2.1.41" evidence="1"/>
<dbReference type="EMBL" id="FM954972">
    <property type="protein sequence ID" value="CAV19574.1"/>
    <property type="molecule type" value="Genomic_DNA"/>
</dbReference>
<dbReference type="SMR" id="B7VJB0"/>
<dbReference type="STRING" id="575788.VS_2415"/>
<dbReference type="KEGG" id="vsp:VS_2415"/>
<dbReference type="PATRIC" id="fig|575788.5.peg.3677"/>
<dbReference type="eggNOG" id="COG0014">
    <property type="taxonomic scope" value="Bacteria"/>
</dbReference>
<dbReference type="HOGENOM" id="CLU_030231_0_0_6"/>
<dbReference type="UniPathway" id="UPA00098">
    <property type="reaction ID" value="UER00360"/>
</dbReference>
<dbReference type="Proteomes" id="UP000009100">
    <property type="component" value="Chromosome 1"/>
</dbReference>
<dbReference type="GO" id="GO:0005737">
    <property type="term" value="C:cytoplasm"/>
    <property type="evidence" value="ECO:0007669"/>
    <property type="project" value="UniProtKB-SubCell"/>
</dbReference>
<dbReference type="GO" id="GO:0004350">
    <property type="term" value="F:glutamate-5-semialdehyde dehydrogenase activity"/>
    <property type="evidence" value="ECO:0007669"/>
    <property type="project" value="UniProtKB-UniRule"/>
</dbReference>
<dbReference type="GO" id="GO:0050661">
    <property type="term" value="F:NADP binding"/>
    <property type="evidence" value="ECO:0007669"/>
    <property type="project" value="InterPro"/>
</dbReference>
<dbReference type="GO" id="GO:0055129">
    <property type="term" value="P:L-proline biosynthetic process"/>
    <property type="evidence" value="ECO:0007669"/>
    <property type="project" value="UniProtKB-UniRule"/>
</dbReference>
<dbReference type="CDD" id="cd07079">
    <property type="entry name" value="ALDH_F18-19_ProA-GPR"/>
    <property type="match status" value="1"/>
</dbReference>
<dbReference type="FunFam" id="3.40.309.10:FF:000006">
    <property type="entry name" value="Gamma-glutamyl phosphate reductase"/>
    <property type="match status" value="1"/>
</dbReference>
<dbReference type="Gene3D" id="3.40.605.10">
    <property type="entry name" value="Aldehyde Dehydrogenase, Chain A, domain 1"/>
    <property type="match status" value="1"/>
</dbReference>
<dbReference type="Gene3D" id="3.40.309.10">
    <property type="entry name" value="Aldehyde Dehydrogenase, Chain A, domain 2"/>
    <property type="match status" value="1"/>
</dbReference>
<dbReference type="HAMAP" id="MF_00412">
    <property type="entry name" value="ProA"/>
    <property type="match status" value="1"/>
</dbReference>
<dbReference type="InterPro" id="IPR016161">
    <property type="entry name" value="Ald_DH/histidinol_DH"/>
</dbReference>
<dbReference type="InterPro" id="IPR016163">
    <property type="entry name" value="Ald_DH_C"/>
</dbReference>
<dbReference type="InterPro" id="IPR016162">
    <property type="entry name" value="Ald_DH_N"/>
</dbReference>
<dbReference type="InterPro" id="IPR015590">
    <property type="entry name" value="Aldehyde_DH_dom"/>
</dbReference>
<dbReference type="InterPro" id="IPR020593">
    <property type="entry name" value="G-glutamylP_reductase_CS"/>
</dbReference>
<dbReference type="InterPro" id="IPR012134">
    <property type="entry name" value="Glu-5-SA_DH"/>
</dbReference>
<dbReference type="InterPro" id="IPR000965">
    <property type="entry name" value="GPR_dom"/>
</dbReference>
<dbReference type="NCBIfam" id="NF001221">
    <property type="entry name" value="PRK00197.1"/>
    <property type="match status" value="1"/>
</dbReference>
<dbReference type="NCBIfam" id="TIGR00407">
    <property type="entry name" value="proA"/>
    <property type="match status" value="1"/>
</dbReference>
<dbReference type="PANTHER" id="PTHR11063:SF8">
    <property type="entry name" value="DELTA-1-PYRROLINE-5-CARBOXYLATE SYNTHASE"/>
    <property type="match status" value="1"/>
</dbReference>
<dbReference type="PANTHER" id="PTHR11063">
    <property type="entry name" value="GLUTAMATE SEMIALDEHYDE DEHYDROGENASE"/>
    <property type="match status" value="1"/>
</dbReference>
<dbReference type="Pfam" id="PF00171">
    <property type="entry name" value="Aldedh"/>
    <property type="match status" value="1"/>
</dbReference>
<dbReference type="PIRSF" id="PIRSF000151">
    <property type="entry name" value="GPR"/>
    <property type="match status" value="1"/>
</dbReference>
<dbReference type="SUPFAM" id="SSF53720">
    <property type="entry name" value="ALDH-like"/>
    <property type="match status" value="1"/>
</dbReference>
<dbReference type="PROSITE" id="PS01223">
    <property type="entry name" value="PROA"/>
    <property type="match status" value="1"/>
</dbReference>
<accession>B7VJB0</accession>
<sequence>MDLTNMGIAAKDAAFHLATASTAQKNKALAIIADELEANAATILEANAKDIELGREAGLTDALLDRLLLNEERLTGIANDVRNVISLNDPVGSEIDSKALENGMSLSRRRVPLGVVGVIYEARPNVTIDIAALCLKTGNASILRGGKETFFSNMELVKVIQSALEKAELPAASVQYIEKPDRELVSQLLKLDDYVDMIIPRGGAGLHKMCKENSTIPVIIGGFGISHIFVDESADLEKSVDVVENSKVQRPSACNSLDTLLVHEAVAEAFLAKLTQRLAGKVTLVADARAKSLLAGFEDQRDAVEGDFDTEWLSYTLGVKVVADVAEAIDHMRVHNASHSDAIMTNSLESSERFINSVGSAAVYVNASTRFTDGAQFGLGAEVAVSTQKLHARGPMGLEELTSYKWVGKANYLVRG</sequence>